<comment type="function">
    <text evidence="1 3 4 6 8 9 13">Catalyzes the last irreversible step in the biosynthesis of L-serine from carbohydrates, the dephosphorylation of O-phospho-L-serine to L-serine (PubMed:12213811, PubMed:14673469, PubMed:15291819, PubMed:25080166, PubMed:9222972). L-serine can then be used in protein synthesis, to produce other amino acids, in nucleotide metabolism or in glutathione synthesis, or can be racemized to D-serine, a neuromodulator (PubMed:14673469). May also act on O-phospho-D-serine (Probable).</text>
</comment>
<comment type="catalytic activity">
    <reaction evidence="1 3 4 6 8">
        <text>O-phospho-L-serine + H2O = L-serine + phosphate</text>
        <dbReference type="Rhea" id="RHEA:21208"/>
        <dbReference type="ChEBI" id="CHEBI:15377"/>
        <dbReference type="ChEBI" id="CHEBI:33384"/>
        <dbReference type="ChEBI" id="CHEBI:43474"/>
        <dbReference type="ChEBI" id="CHEBI:57524"/>
        <dbReference type="EC" id="3.1.3.3"/>
    </reaction>
    <physiologicalReaction direction="left-to-right" evidence="3 6 8">
        <dbReference type="Rhea" id="RHEA:21209"/>
    </physiologicalReaction>
</comment>
<comment type="catalytic activity">
    <reaction evidence="13">
        <text>O-phospho-D-serine + H2O = D-serine + phosphate</text>
        <dbReference type="Rhea" id="RHEA:24873"/>
        <dbReference type="ChEBI" id="CHEBI:15377"/>
        <dbReference type="ChEBI" id="CHEBI:35247"/>
        <dbReference type="ChEBI" id="CHEBI:43474"/>
        <dbReference type="ChEBI" id="CHEBI:58680"/>
        <dbReference type="EC" id="3.1.3.3"/>
    </reaction>
    <physiologicalReaction direction="left-to-right" evidence="13">
        <dbReference type="Rhea" id="RHEA:24874"/>
    </physiologicalReaction>
</comment>
<comment type="cofactor">
    <cofactor evidence="4 7">
        <name>Mg(2+)</name>
        <dbReference type="ChEBI" id="CHEBI:18420"/>
    </cofactor>
    <text evidence="4 7">Binds 1 Mg(2+) ion per subunit.</text>
</comment>
<comment type="activity regulation">
    <text evidence="4">Inhibited by calcium ions.</text>
</comment>
<comment type="pathway">
    <text evidence="3 6 8">Amino-acid biosynthesis; L-serine biosynthesis; L-serine from 3-phospho-D-glycerate: step 3/3.</text>
</comment>
<comment type="subunit">
    <text evidence="1 2 4 7">Homodimer.</text>
</comment>
<comment type="interaction">
    <interactant intactId="EBI-1042956">
        <id>P78330</id>
    </interactant>
    <interactant intactId="EBI-1042956">
        <id>P78330</id>
        <label>PSPH</label>
    </interactant>
    <organismsDiffer>false</organismsDiffer>
    <experiments>3</experiments>
</comment>
<comment type="subcellular location">
    <subcellularLocation>
        <location evidence="13">Cytoplasm</location>
        <location evidence="13">Cytosol</location>
    </subcellularLocation>
</comment>
<comment type="disease" evidence="3 6 8">
    <disease id="DI-00010">
        <name>Phosphoserine phosphatase deficiency</name>
        <acronym>PSPHD</acronym>
        <description>An autosomal recessive disorder that results in pre- and postnatal growth retardation, moderate psychomotor retardation and facial features suggestive of Williams syndrome.</description>
        <dbReference type="MIM" id="614023"/>
    </disease>
    <text>The disease is caused by variants affecting the gene represented in this entry.</text>
</comment>
<comment type="similarity">
    <text evidence="11">Belongs to the HAD-like hydrolase superfamily. SerB family.</text>
</comment>
<evidence type="ECO:0000269" key="1">
    <source>
    </source>
</evidence>
<evidence type="ECO:0000269" key="2">
    <source>
    </source>
</evidence>
<evidence type="ECO:0000269" key="3">
    <source>
    </source>
</evidence>
<evidence type="ECO:0000269" key="4">
    <source>
    </source>
</evidence>
<evidence type="ECO:0000269" key="5">
    <source>
    </source>
</evidence>
<evidence type="ECO:0000269" key="6">
    <source>
    </source>
</evidence>
<evidence type="ECO:0000269" key="7">
    <source>
    </source>
</evidence>
<evidence type="ECO:0000269" key="8">
    <source>
    </source>
</evidence>
<evidence type="ECO:0000303" key="9">
    <source>
    </source>
</evidence>
<evidence type="ECO:0000303" key="10">
    <source>
    </source>
</evidence>
<evidence type="ECO:0000305" key="11"/>
<evidence type="ECO:0000305" key="12">
    <source>
    </source>
</evidence>
<evidence type="ECO:0000305" key="13">
    <source>
    </source>
</evidence>
<evidence type="ECO:0000305" key="14">
    <source>
    </source>
</evidence>
<evidence type="ECO:0000312" key="15">
    <source>
        <dbReference type="HGNC" id="HGNC:9577"/>
    </source>
</evidence>
<evidence type="ECO:0007744" key="16">
    <source>
        <dbReference type="PDB" id="1L8L"/>
    </source>
</evidence>
<evidence type="ECO:0007744" key="17">
    <source>
        <dbReference type="PDB" id="1L8O"/>
    </source>
</evidence>
<evidence type="ECO:0007744" key="18">
    <source>
        <dbReference type="PDB" id="1NNL"/>
    </source>
</evidence>
<evidence type="ECO:0007744" key="19">
    <source>
        <dbReference type="PDB" id="6HYJ"/>
    </source>
</evidence>
<evidence type="ECO:0007744" key="20">
    <source>
        <dbReference type="PDB" id="6HYY"/>
    </source>
</evidence>
<evidence type="ECO:0007744" key="21">
    <source>
        <dbReference type="PDB" id="6Q6J"/>
    </source>
</evidence>
<evidence type="ECO:0007744" key="22">
    <source>
    </source>
</evidence>
<evidence type="ECO:0007829" key="23">
    <source>
        <dbReference type="PDB" id="1L8L"/>
    </source>
</evidence>
<evidence type="ECO:0007829" key="24">
    <source>
        <dbReference type="PDB" id="1NNL"/>
    </source>
</evidence>
<evidence type="ECO:0007829" key="25">
    <source>
        <dbReference type="PDB" id="6HYJ"/>
    </source>
</evidence>
<organism>
    <name type="scientific">Homo sapiens</name>
    <name type="common">Human</name>
    <dbReference type="NCBI Taxonomy" id="9606"/>
    <lineage>
        <taxon>Eukaryota</taxon>
        <taxon>Metazoa</taxon>
        <taxon>Chordata</taxon>
        <taxon>Craniata</taxon>
        <taxon>Vertebrata</taxon>
        <taxon>Euteleostomi</taxon>
        <taxon>Mammalia</taxon>
        <taxon>Eutheria</taxon>
        <taxon>Euarchontoglires</taxon>
        <taxon>Primates</taxon>
        <taxon>Haplorrhini</taxon>
        <taxon>Catarrhini</taxon>
        <taxon>Hominidae</taxon>
        <taxon>Homo</taxon>
    </lineage>
</organism>
<gene>
    <name evidence="15" type="primary">PSPH</name>
</gene>
<keyword id="KW-0002">3D-structure</keyword>
<keyword id="KW-0007">Acetylation</keyword>
<keyword id="KW-0028">Amino-acid biosynthesis</keyword>
<keyword id="KW-0963">Cytoplasm</keyword>
<keyword id="KW-0225">Disease variant</keyword>
<keyword id="KW-0378">Hydrolase</keyword>
<keyword id="KW-0460">Magnesium</keyword>
<keyword id="KW-0479">Metal-binding</keyword>
<keyword id="KW-1267">Proteomics identification</keyword>
<keyword id="KW-1185">Reference proteome</keyword>
<keyword id="KW-0718">Serine biosynthesis</keyword>
<protein>
    <recommendedName>
        <fullName evidence="12">Phosphoserine phosphatase</fullName>
        <shortName evidence="12">PSP</shortName>
        <shortName>PSPase</shortName>
        <ecNumber evidence="1 3 4 5 6 8">3.1.3.3</ecNumber>
    </recommendedName>
    <alternativeName>
        <fullName evidence="10">L-3-phosphoserine phosphatase</fullName>
    </alternativeName>
    <alternativeName>
        <fullName>O-phosphoserine phosphohydrolase</fullName>
    </alternativeName>
</protein>
<feature type="chain" id="PRO_0000156879" description="Phosphoserine phosphatase">
    <location>
        <begin position="1"/>
        <end position="225"/>
    </location>
</feature>
<feature type="active site" description="Nucleophile" evidence="14 19 20 21">
    <location>
        <position position="20"/>
    </location>
</feature>
<feature type="active site" description="Proton donor" evidence="14 19 20 21">
    <location>
        <position position="22"/>
    </location>
</feature>
<feature type="binding site" evidence="7 19 20 21">
    <location>
        <begin position="20"/>
        <end position="22"/>
    </location>
    <ligand>
        <name>L-serine</name>
        <dbReference type="ChEBI" id="CHEBI:33384"/>
    </ligand>
</feature>
<feature type="binding site" evidence="7 20">
    <location>
        <position position="20"/>
    </location>
    <ligand>
        <name>Mg(2+)</name>
        <dbReference type="ChEBI" id="CHEBI:18420"/>
    </ligand>
</feature>
<feature type="binding site" evidence="7 20">
    <location>
        <position position="22"/>
    </location>
    <ligand>
        <name>Mg(2+)</name>
        <dbReference type="ChEBI" id="CHEBI:18420"/>
    </ligand>
</feature>
<feature type="binding site" evidence="7 19 20 21">
    <location>
        <position position="52"/>
    </location>
    <ligand>
        <name>O-phospho-L-serine</name>
        <dbReference type="ChEBI" id="CHEBI:57524"/>
    </ligand>
</feature>
<feature type="binding site" evidence="7 19 20 21">
    <location>
        <position position="53"/>
    </location>
    <ligand>
        <name>phosphate</name>
        <dbReference type="ChEBI" id="CHEBI:43474"/>
    </ligand>
</feature>
<feature type="binding site" evidence="7 19 20 21">
    <location>
        <begin position="109"/>
        <end position="111"/>
    </location>
    <ligand>
        <name>L-serine</name>
        <dbReference type="ChEBI" id="CHEBI:33384"/>
    </ligand>
</feature>
<feature type="binding site" evidence="7 19 20 21">
    <location>
        <begin position="109"/>
        <end position="111"/>
    </location>
    <ligand>
        <name>O-phospho-L-serine</name>
        <dbReference type="ChEBI" id="CHEBI:57524"/>
    </ligand>
</feature>
<feature type="binding site" evidence="7 19 20 21">
    <location>
        <position position="158"/>
    </location>
    <ligand>
        <name>L-serine</name>
        <dbReference type="ChEBI" id="CHEBI:33384"/>
    </ligand>
</feature>
<feature type="binding site" evidence="7 19 20 21">
    <location>
        <position position="158"/>
    </location>
    <ligand>
        <name>O-phospho-L-serine</name>
        <dbReference type="ChEBI" id="CHEBI:57524"/>
    </ligand>
</feature>
<feature type="binding site" evidence="7 20">
    <location>
        <position position="179"/>
    </location>
    <ligand>
        <name>Mg(2+)</name>
        <dbReference type="ChEBI" id="CHEBI:18420"/>
    </ligand>
</feature>
<feature type="binding site" evidence="7 19 20 21">
    <location>
        <position position="182"/>
    </location>
    <ligand>
        <name>O-phospho-L-serine</name>
        <dbReference type="ChEBI" id="CHEBI:57524"/>
    </ligand>
</feature>
<feature type="binding site" evidence="7 19 20 21">
    <location>
        <position position="182"/>
    </location>
    <ligand>
        <name>phosphate</name>
        <dbReference type="ChEBI" id="CHEBI:43474"/>
    </ligand>
</feature>
<feature type="modified residue" description="N-acetylmethionine" evidence="22">
    <location>
        <position position="1"/>
    </location>
</feature>
<feature type="sequence variant" id="VAR_022378" description="In PSPHD; decreased L-phosphoserine phosphatase activity; dbSNP:rs104894035." evidence="3">
    <original>D</original>
    <variation>N</variation>
    <location>
        <position position="32"/>
    </location>
</feature>
<feature type="sequence variant" id="VAR_084508" description="In PSPHD; decreased L-phosphoserine phosphatase activity." evidence="6">
    <original>A</original>
    <variation>T</variation>
    <location>
        <position position="35"/>
    </location>
</feature>
<feature type="sequence variant" id="VAR_022379" description="In PSPHD; decreased L-phosphoserine phosphatase activity; dbSNP:rs104894036." evidence="3">
    <original>M</original>
    <variation>T</variation>
    <location>
        <position position="52"/>
    </location>
</feature>
<feature type="mutagenesis site" description="Reduces L-phosphoserine phosphatase activity by about 50%." evidence="1">
    <original>S</original>
    <variation>A</variation>
    <location>
        <position position="23"/>
    </location>
</feature>
<feature type="mutagenesis site" description="Reduces L-phosphoserine phosphatase activity by about 80%." evidence="1">
    <original>S</original>
    <variation>T</variation>
    <location>
        <position position="23"/>
    </location>
</feature>
<feature type="mutagenesis site" description="Reduces L-phosphoserine phosphatase activity by about 95%." evidence="1">
    <original>E</original>
    <variation>D</variation>
    <location>
        <position position="29"/>
    </location>
</feature>
<feature type="mutagenesis site" description="Loss of L-phosphoserine phosphatase activity." evidence="1">
    <original>E</original>
    <variation>Q</variation>
    <location>
        <position position="29"/>
    </location>
</feature>
<feature type="mutagenesis site" description="Loss of L-phosphoserine phosphatase activity." evidence="1">
    <original>R</original>
    <variation>A</variation>
    <variation>K</variation>
    <location>
        <position position="65"/>
    </location>
</feature>
<feature type="mutagenesis site" description="Reduces L-phosphoserine phosphatase activity by about 75%." evidence="1">
    <original>N</original>
    <variation>A</variation>
    <location>
        <position position="133"/>
    </location>
</feature>
<feature type="mutagenesis site" description="Reduces L-phosphoserine phosphatase activity by about 99%." evidence="1">
    <original>T</original>
    <variation>S</variation>
    <location>
        <position position="182"/>
    </location>
</feature>
<feature type="mutagenesis site" description="Reduces L-phosphoserine phosphatase activity by about 25%." evidence="1">
    <original>T</original>
    <variation>V</variation>
    <location>
        <position position="182"/>
    </location>
</feature>
<feature type="mutagenesis site" description="Reduces L-phosphoserine phosphatase activity by about 99%." evidence="1">
    <original>R</original>
    <variation>A</variation>
    <location>
        <position position="202"/>
    </location>
</feature>
<feature type="mutagenesis site" description="Reduces L-phosphoserine phosphatase activity by about 95%." evidence="1">
    <original>R</original>
    <variation>K</variation>
    <location>
        <position position="202"/>
    </location>
</feature>
<feature type="sequence conflict" description="In Ref. 1; CAA71318." evidence="11" ref="1">
    <original>V</original>
    <variation>I</variation>
    <location>
        <position position="2"/>
    </location>
</feature>
<feature type="helix" evidence="24">
    <location>
        <begin position="6"/>
        <end position="13"/>
    </location>
</feature>
<feature type="strand" evidence="24">
    <location>
        <begin position="15"/>
        <end position="20"/>
    </location>
</feature>
<feature type="turn" evidence="24">
    <location>
        <begin position="23"/>
        <end position="25"/>
    </location>
</feature>
<feature type="strand" evidence="24">
    <location>
        <begin position="26"/>
        <end position="28"/>
    </location>
</feature>
<feature type="helix" evidence="24">
    <location>
        <begin position="30"/>
        <end position="37"/>
    </location>
</feature>
<feature type="turn" evidence="24">
    <location>
        <begin position="41"/>
        <end position="43"/>
    </location>
</feature>
<feature type="turn" evidence="23">
    <location>
        <begin position="45"/>
        <end position="47"/>
    </location>
</feature>
<feature type="turn" evidence="25">
    <location>
        <begin position="52"/>
        <end position="55"/>
    </location>
</feature>
<feature type="helix" evidence="24">
    <location>
        <begin position="58"/>
        <end position="69"/>
    </location>
</feature>
<feature type="helix" evidence="24">
    <location>
        <begin position="73"/>
        <end position="82"/>
    </location>
</feature>
<feature type="helix" evidence="24">
    <location>
        <begin position="91"/>
        <end position="100"/>
    </location>
</feature>
<feature type="strand" evidence="24">
    <location>
        <begin position="104"/>
        <end position="112"/>
    </location>
</feature>
<feature type="helix" evidence="24">
    <location>
        <begin position="113"/>
        <end position="122"/>
    </location>
</feature>
<feature type="helix" evidence="24">
    <location>
        <begin position="127"/>
        <end position="129"/>
    </location>
</feature>
<feature type="strand" evidence="24">
    <location>
        <begin position="130"/>
        <end position="133"/>
    </location>
</feature>
<feature type="strand" evidence="24">
    <location>
        <begin position="135"/>
        <end position="137"/>
    </location>
</feature>
<feature type="strand" evidence="24">
    <location>
        <begin position="143"/>
        <end position="146"/>
    </location>
</feature>
<feature type="strand" evidence="23">
    <location>
        <begin position="148"/>
        <end position="150"/>
    </location>
</feature>
<feature type="helix" evidence="24">
    <location>
        <begin position="151"/>
        <end position="153"/>
    </location>
</feature>
<feature type="helix" evidence="24">
    <location>
        <begin position="157"/>
        <end position="169"/>
    </location>
</feature>
<feature type="strand" evidence="24">
    <location>
        <begin position="174"/>
        <end position="180"/>
    </location>
</feature>
<feature type="helix" evidence="24">
    <location>
        <begin position="181"/>
        <end position="184"/>
    </location>
</feature>
<feature type="turn" evidence="24">
    <location>
        <begin position="185"/>
        <end position="189"/>
    </location>
</feature>
<feature type="strand" evidence="24">
    <location>
        <begin position="190"/>
        <end position="196"/>
    </location>
</feature>
<feature type="helix" evidence="24">
    <location>
        <begin position="203"/>
        <end position="208"/>
    </location>
</feature>
<feature type="strand" evidence="24">
    <location>
        <begin position="210"/>
        <end position="214"/>
    </location>
</feature>
<feature type="helix" evidence="24">
    <location>
        <begin position="216"/>
        <end position="219"/>
    </location>
</feature>
<feature type="helix" evidence="23">
    <location>
        <begin position="221"/>
        <end position="224"/>
    </location>
</feature>
<dbReference type="EC" id="3.1.3.3" evidence="1 3 4 5 6 8"/>
<dbReference type="EMBL" id="Y10275">
    <property type="protein sequence ID" value="CAA71318.1"/>
    <property type="molecule type" value="mRNA"/>
</dbReference>
<dbReference type="EMBL" id="AK315235">
    <property type="protein sequence ID" value="BAG37662.1"/>
    <property type="molecule type" value="mRNA"/>
</dbReference>
<dbReference type="EMBL" id="BX537439">
    <property type="protein sequence ID" value="CAD97681.1"/>
    <property type="molecule type" value="mRNA"/>
</dbReference>
<dbReference type="EMBL" id="CH471140">
    <property type="protein sequence ID" value="EAX07968.1"/>
    <property type="molecule type" value="Genomic_DNA"/>
</dbReference>
<dbReference type="EMBL" id="BC063614">
    <property type="protein sequence ID" value="AAH63614.1"/>
    <property type="molecule type" value="mRNA"/>
</dbReference>
<dbReference type="CCDS" id="CCDS5522.1"/>
<dbReference type="RefSeq" id="NP_001357432.1">
    <property type="nucleotide sequence ID" value="NM_001370503.1"/>
</dbReference>
<dbReference type="RefSeq" id="NP_001357433.1">
    <property type="nucleotide sequence ID" value="NM_001370504.1"/>
</dbReference>
<dbReference type="RefSeq" id="NP_001357434.1">
    <property type="nucleotide sequence ID" value="NM_001370505.1"/>
</dbReference>
<dbReference type="RefSeq" id="NP_001357435.1">
    <property type="nucleotide sequence ID" value="NM_001370506.1"/>
</dbReference>
<dbReference type="RefSeq" id="NP_001357436.1">
    <property type="nucleotide sequence ID" value="NM_001370507.1"/>
</dbReference>
<dbReference type="RefSeq" id="NP_001357437.1">
    <property type="nucleotide sequence ID" value="NM_001370508.1"/>
</dbReference>
<dbReference type="RefSeq" id="NP_001357438.1">
    <property type="nucleotide sequence ID" value="NM_001370509.1"/>
</dbReference>
<dbReference type="RefSeq" id="NP_001357439.1">
    <property type="nucleotide sequence ID" value="NM_001370510.1"/>
</dbReference>
<dbReference type="RefSeq" id="NP_001357440.1">
    <property type="nucleotide sequence ID" value="NM_001370511.1"/>
</dbReference>
<dbReference type="RefSeq" id="NP_001357441.1">
    <property type="nucleotide sequence ID" value="NM_001370512.1"/>
</dbReference>
<dbReference type="RefSeq" id="NP_001357442.1">
    <property type="nucleotide sequence ID" value="NM_001370513.1"/>
</dbReference>
<dbReference type="RefSeq" id="NP_001357443.1">
    <property type="nucleotide sequence ID" value="NM_001370514.1"/>
</dbReference>
<dbReference type="RefSeq" id="NP_001357444.1">
    <property type="nucleotide sequence ID" value="NM_001370515.1"/>
</dbReference>
<dbReference type="RefSeq" id="NP_001357445.1">
    <property type="nucleotide sequence ID" value="NM_001370516.1"/>
</dbReference>
<dbReference type="RefSeq" id="NP_001357446.1">
    <property type="nucleotide sequence ID" value="NM_001370517.1"/>
</dbReference>
<dbReference type="RefSeq" id="NP_001357447.1">
    <property type="nucleotide sequence ID" value="NM_001370518.1"/>
</dbReference>
<dbReference type="RefSeq" id="NP_001357448.1">
    <property type="nucleotide sequence ID" value="NM_001370519.1"/>
</dbReference>
<dbReference type="RefSeq" id="NP_001357449.1">
    <property type="nucleotide sequence ID" value="NM_001370520.1"/>
</dbReference>
<dbReference type="RefSeq" id="NP_001357450.1">
    <property type="nucleotide sequence ID" value="NM_001370521.1"/>
</dbReference>
<dbReference type="RefSeq" id="NP_001357451.1">
    <property type="nucleotide sequence ID" value="NM_001370522.1"/>
</dbReference>
<dbReference type="RefSeq" id="NP_004568.2">
    <property type="nucleotide sequence ID" value="NM_004577.3"/>
</dbReference>
<dbReference type="RefSeq" id="XP_005271830.1">
    <property type="nucleotide sequence ID" value="XM_005271773.1"/>
</dbReference>
<dbReference type="RefSeq" id="XP_005271831.1">
    <property type="nucleotide sequence ID" value="XM_005271774.1"/>
</dbReference>
<dbReference type="RefSeq" id="XP_005271832.1">
    <property type="nucleotide sequence ID" value="XM_005271775.1"/>
</dbReference>
<dbReference type="RefSeq" id="XP_005271833.1">
    <property type="nucleotide sequence ID" value="XM_005271776.1"/>
</dbReference>
<dbReference type="RefSeq" id="XP_006715823.1">
    <property type="nucleotide sequence ID" value="XM_006715760.1"/>
</dbReference>
<dbReference type="RefSeq" id="XP_011513763.1">
    <property type="nucleotide sequence ID" value="XM_011515461.1"/>
</dbReference>
<dbReference type="RefSeq" id="XP_016867955.1">
    <property type="nucleotide sequence ID" value="XM_017012466.1"/>
</dbReference>
<dbReference type="RefSeq" id="XP_016867956.1">
    <property type="nucleotide sequence ID" value="XM_017012467.3"/>
</dbReference>
<dbReference type="RefSeq" id="XP_047276600.1">
    <property type="nucleotide sequence ID" value="XM_047420644.1"/>
</dbReference>
<dbReference type="RefSeq" id="XP_047276601.1">
    <property type="nucleotide sequence ID" value="XM_047420645.1"/>
</dbReference>
<dbReference type="RefSeq" id="XP_047276602.1">
    <property type="nucleotide sequence ID" value="XM_047420646.1"/>
</dbReference>
<dbReference type="RefSeq" id="XP_047276603.1">
    <property type="nucleotide sequence ID" value="XM_047420647.1"/>
</dbReference>
<dbReference type="RefSeq" id="XP_047276604.1">
    <property type="nucleotide sequence ID" value="XM_047420648.1"/>
</dbReference>
<dbReference type="RefSeq" id="XP_047276605.1">
    <property type="nucleotide sequence ID" value="XM_047420649.1"/>
</dbReference>
<dbReference type="RefSeq" id="XP_047276606.1">
    <property type="nucleotide sequence ID" value="XM_047420650.1"/>
</dbReference>
<dbReference type="RefSeq" id="XP_054214668.1">
    <property type="nucleotide sequence ID" value="XM_054358693.1"/>
</dbReference>
<dbReference type="RefSeq" id="XP_054214669.1">
    <property type="nucleotide sequence ID" value="XM_054358694.1"/>
</dbReference>
<dbReference type="RefSeq" id="XP_054214670.1">
    <property type="nucleotide sequence ID" value="XM_054358695.1"/>
</dbReference>
<dbReference type="RefSeq" id="XP_054214671.1">
    <property type="nucleotide sequence ID" value="XM_054358696.1"/>
</dbReference>
<dbReference type="RefSeq" id="XP_054214672.1">
    <property type="nucleotide sequence ID" value="XM_054358697.1"/>
</dbReference>
<dbReference type="RefSeq" id="XP_054214673.1">
    <property type="nucleotide sequence ID" value="XM_054358698.1"/>
</dbReference>
<dbReference type="RefSeq" id="XP_054214674.1">
    <property type="nucleotide sequence ID" value="XM_054358699.1"/>
</dbReference>
<dbReference type="PDB" id="1L8L">
    <property type="method" value="X-ray"/>
    <property type="resolution" value="2.51 A"/>
    <property type="chains" value="A/B=1-225"/>
</dbReference>
<dbReference type="PDB" id="1L8O">
    <property type="method" value="X-ray"/>
    <property type="resolution" value="2.80 A"/>
    <property type="chains" value="A/B=1-225"/>
</dbReference>
<dbReference type="PDB" id="1NNL">
    <property type="method" value="X-ray"/>
    <property type="resolution" value="1.53 A"/>
    <property type="chains" value="A/B=1-225"/>
</dbReference>
<dbReference type="PDB" id="6HYJ">
    <property type="method" value="X-ray"/>
    <property type="resolution" value="1.93 A"/>
    <property type="chains" value="A/B=3-224"/>
</dbReference>
<dbReference type="PDB" id="6HYY">
    <property type="method" value="X-ray"/>
    <property type="resolution" value="1.57 A"/>
    <property type="chains" value="A/B=5-225"/>
</dbReference>
<dbReference type="PDB" id="6Q6J">
    <property type="method" value="X-ray"/>
    <property type="resolution" value="1.99 A"/>
    <property type="chains" value="A/B=5-224"/>
</dbReference>
<dbReference type="PDBsum" id="1L8L"/>
<dbReference type="PDBsum" id="1L8O"/>
<dbReference type="PDBsum" id="1NNL"/>
<dbReference type="PDBsum" id="6HYJ"/>
<dbReference type="PDBsum" id="6HYY"/>
<dbReference type="PDBsum" id="6Q6J"/>
<dbReference type="SMR" id="P78330"/>
<dbReference type="BioGRID" id="111695">
    <property type="interactions" value="26"/>
</dbReference>
<dbReference type="FunCoup" id="P78330">
    <property type="interactions" value="1147"/>
</dbReference>
<dbReference type="IntAct" id="P78330">
    <property type="interactions" value="5"/>
</dbReference>
<dbReference type="MINT" id="P78330"/>
<dbReference type="STRING" id="9606.ENSP00000378854"/>
<dbReference type="DrugBank" id="DB03292">
    <property type="generic name" value="3-Phosphono-D-alanine"/>
</dbReference>
<dbReference type="DrugBank" id="DB01593">
    <property type="generic name" value="Zinc"/>
</dbReference>
<dbReference type="DrugBank" id="DB14487">
    <property type="generic name" value="Zinc acetate"/>
</dbReference>
<dbReference type="DrugBank" id="DB14533">
    <property type="generic name" value="Zinc chloride"/>
</dbReference>
<dbReference type="DrugBank" id="DB14548">
    <property type="generic name" value="Zinc sulfate, unspecified form"/>
</dbReference>
<dbReference type="DEPOD" id="PSPH"/>
<dbReference type="GlyGen" id="P78330">
    <property type="glycosylation" value="1 site, 1 O-linked glycan (1 site)"/>
</dbReference>
<dbReference type="iPTMnet" id="P78330"/>
<dbReference type="MetOSite" id="P78330"/>
<dbReference type="PhosphoSitePlus" id="P78330"/>
<dbReference type="BioMuta" id="PSPH"/>
<dbReference type="DMDM" id="62906870"/>
<dbReference type="CPTAC" id="CPTAC-2765"/>
<dbReference type="CPTAC" id="CPTAC-2766"/>
<dbReference type="jPOST" id="P78330"/>
<dbReference type="MassIVE" id="P78330"/>
<dbReference type="PaxDb" id="9606-ENSP00000378854"/>
<dbReference type="PeptideAtlas" id="P78330"/>
<dbReference type="ProteomicsDB" id="57569"/>
<dbReference type="Pumba" id="P78330"/>
<dbReference type="Antibodypedia" id="13863">
    <property type="antibodies" value="343 antibodies from 32 providers"/>
</dbReference>
<dbReference type="DNASU" id="5723"/>
<dbReference type="Ensembl" id="ENST00000275605.8">
    <property type="protein sequence ID" value="ENSP00000275605.3"/>
    <property type="gene ID" value="ENSG00000146733.14"/>
</dbReference>
<dbReference type="Ensembl" id="ENST00000395471.7">
    <property type="protein sequence ID" value="ENSP00000378854.3"/>
    <property type="gene ID" value="ENSG00000146733.14"/>
</dbReference>
<dbReference type="Ensembl" id="ENST00000437355.6">
    <property type="protein sequence ID" value="ENSP00000401639.2"/>
    <property type="gene ID" value="ENSG00000146733.14"/>
</dbReference>
<dbReference type="GeneID" id="5723"/>
<dbReference type="KEGG" id="hsa:5723"/>
<dbReference type="MANE-Select" id="ENST00000275605.8">
    <property type="protein sequence ID" value="ENSP00000275605.3"/>
    <property type="RefSeq nucleotide sequence ID" value="NM_004577.4"/>
    <property type="RefSeq protein sequence ID" value="NP_004568.2"/>
</dbReference>
<dbReference type="UCSC" id="uc003trh.4">
    <property type="organism name" value="human"/>
</dbReference>
<dbReference type="AGR" id="HGNC:9577"/>
<dbReference type="CTD" id="5723"/>
<dbReference type="DisGeNET" id="5723"/>
<dbReference type="GeneCards" id="PSPH"/>
<dbReference type="GeneReviews" id="PSPH"/>
<dbReference type="HGNC" id="HGNC:9577">
    <property type="gene designation" value="PSPH"/>
</dbReference>
<dbReference type="HPA" id="ENSG00000146733">
    <property type="expression patterns" value="Low tissue specificity"/>
</dbReference>
<dbReference type="MalaCards" id="PSPH"/>
<dbReference type="MIM" id="172480">
    <property type="type" value="gene"/>
</dbReference>
<dbReference type="MIM" id="614023">
    <property type="type" value="phenotype"/>
</dbReference>
<dbReference type="neXtProt" id="NX_P78330"/>
<dbReference type="OpenTargets" id="ENSG00000146733"/>
<dbReference type="Orphanet" id="79350">
    <property type="disease" value="3-phosphoserine phosphatase deficiency, infantile/juvenile form"/>
</dbReference>
<dbReference type="Orphanet" id="583612">
    <property type="disease" value="Neu-Laxova syndrome due to 3-phosphoserine phosphatase deficiency"/>
</dbReference>
<dbReference type="PharmGKB" id="PA33928"/>
<dbReference type="VEuPathDB" id="HostDB:ENSG00000146733"/>
<dbReference type="eggNOG" id="KOG1615">
    <property type="taxonomic scope" value="Eukaryota"/>
</dbReference>
<dbReference type="GeneTree" id="ENSGT00390000003115"/>
<dbReference type="HOGENOM" id="CLU_036368_2_1_1"/>
<dbReference type="InParanoid" id="P78330"/>
<dbReference type="OMA" id="ANYFIGF"/>
<dbReference type="OrthoDB" id="27226at2759"/>
<dbReference type="PAN-GO" id="P78330">
    <property type="GO annotations" value="4 GO annotations based on evolutionary models"/>
</dbReference>
<dbReference type="PhylomeDB" id="P78330"/>
<dbReference type="TreeFam" id="TF315024"/>
<dbReference type="BioCyc" id="MetaCyc:HS07370-MONOMER"/>
<dbReference type="BRENDA" id="3.1.3.3">
    <property type="organism ID" value="2681"/>
</dbReference>
<dbReference type="PathwayCommons" id="P78330"/>
<dbReference type="Reactome" id="R-HSA-977347">
    <property type="pathway name" value="Serine biosynthesis"/>
</dbReference>
<dbReference type="SignaLink" id="P78330"/>
<dbReference type="SIGNOR" id="P78330"/>
<dbReference type="UniPathway" id="UPA00135">
    <property type="reaction ID" value="UER00198"/>
</dbReference>
<dbReference type="BioGRID-ORCS" id="5723">
    <property type="hits" value="14 hits in 1181 CRISPR screens"/>
</dbReference>
<dbReference type="ChiTaRS" id="PSPH">
    <property type="organism name" value="human"/>
</dbReference>
<dbReference type="EvolutionaryTrace" id="P78330"/>
<dbReference type="GeneWiki" id="PSPH"/>
<dbReference type="GenomeRNAi" id="5723"/>
<dbReference type="Pharos" id="P78330">
    <property type="development level" value="Tbio"/>
</dbReference>
<dbReference type="PRO" id="PR:P78330"/>
<dbReference type="Proteomes" id="UP000005640">
    <property type="component" value="Chromosome 7"/>
</dbReference>
<dbReference type="RNAct" id="P78330">
    <property type="molecule type" value="protein"/>
</dbReference>
<dbReference type="Bgee" id="ENSG00000146733">
    <property type="expression patterns" value="Expressed in adrenal tissue and 186 other cell types or tissues"/>
</dbReference>
<dbReference type="ExpressionAtlas" id="P78330">
    <property type="expression patterns" value="baseline and differential"/>
</dbReference>
<dbReference type="GO" id="GO:0005737">
    <property type="term" value="C:cytoplasm"/>
    <property type="evidence" value="ECO:0000318"/>
    <property type="project" value="GO_Central"/>
</dbReference>
<dbReference type="GO" id="GO:0005829">
    <property type="term" value="C:cytosol"/>
    <property type="evidence" value="ECO:0000304"/>
    <property type="project" value="Reactome"/>
</dbReference>
<dbReference type="GO" id="GO:0042802">
    <property type="term" value="F:identical protein binding"/>
    <property type="evidence" value="ECO:0000353"/>
    <property type="project" value="IntAct"/>
</dbReference>
<dbReference type="GO" id="GO:0036424">
    <property type="term" value="F:L-phosphoserine phosphatase activity"/>
    <property type="evidence" value="ECO:0000314"/>
    <property type="project" value="UniProtKB"/>
</dbReference>
<dbReference type="GO" id="GO:0000287">
    <property type="term" value="F:magnesium ion binding"/>
    <property type="evidence" value="ECO:0000314"/>
    <property type="project" value="UniProtKB"/>
</dbReference>
<dbReference type="GO" id="GO:0042803">
    <property type="term" value="F:protein homodimerization activity"/>
    <property type="evidence" value="ECO:0000353"/>
    <property type="project" value="UniProtKB"/>
</dbReference>
<dbReference type="GO" id="GO:0001701">
    <property type="term" value="P:in utero embryonic development"/>
    <property type="evidence" value="ECO:0007669"/>
    <property type="project" value="Ensembl"/>
</dbReference>
<dbReference type="GO" id="GO:0006564">
    <property type="term" value="P:L-serine biosynthetic process"/>
    <property type="evidence" value="ECO:0000315"/>
    <property type="project" value="UniProtKB"/>
</dbReference>
<dbReference type="GO" id="GO:0006563">
    <property type="term" value="P:L-serine metabolic process"/>
    <property type="evidence" value="ECO:0000314"/>
    <property type="project" value="UniProtKB"/>
</dbReference>
<dbReference type="GO" id="GO:0009612">
    <property type="term" value="P:response to mechanical stimulus"/>
    <property type="evidence" value="ECO:0007669"/>
    <property type="project" value="Ensembl"/>
</dbReference>
<dbReference type="GO" id="GO:0031667">
    <property type="term" value="P:response to nutrient levels"/>
    <property type="evidence" value="ECO:0007669"/>
    <property type="project" value="Ensembl"/>
</dbReference>
<dbReference type="GO" id="GO:0033574">
    <property type="term" value="P:response to testosterone"/>
    <property type="evidence" value="ECO:0007669"/>
    <property type="project" value="Ensembl"/>
</dbReference>
<dbReference type="CDD" id="cd04309">
    <property type="entry name" value="HAD_PSP_eu"/>
    <property type="match status" value="1"/>
</dbReference>
<dbReference type="DisProt" id="DP02639"/>
<dbReference type="FunFam" id="3.40.50.1000:FF:000077">
    <property type="entry name" value="Phosphoserine phosphatase, chloroplastic"/>
    <property type="match status" value="1"/>
</dbReference>
<dbReference type="FunFam" id="3.40.50.1000:FF:000114">
    <property type="entry name" value="Phosphoserine phosphatase, chloroplastic"/>
    <property type="match status" value="1"/>
</dbReference>
<dbReference type="Gene3D" id="3.40.50.1000">
    <property type="entry name" value="HAD superfamily/HAD-like"/>
    <property type="match status" value="2"/>
</dbReference>
<dbReference type="InterPro" id="IPR050582">
    <property type="entry name" value="HAD-like_SerB"/>
</dbReference>
<dbReference type="InterPro" id="IPR036412">
    <property type="entry name" value="HAD-like_sf"/>
</dbReference>
<dbReference type="InterPro" id="IPR023214">
    <property type="entry name" value="HAD_sf"/>
</dbReference>
<dbReference type="InterPro" id="IPR004469">
    <property type="entry name" value="PSP"/>
</dbReference>
<dbReference type="NCBIfam" id="TIGR01488">
    <property type="entry name" value="HAD-SF-IB"/>
    <property type="match status" value="1"/>
</dbReference>
<dbReference type="NCBIfam" id="TIGR00338">
    <property type="entry name" value="serB"/>
    <property type="match status" value="1"/>
</dbReference>
<dbReference type="PANTHER" id="PTHR43344">
    <property type="entry name" value="PHOSPHOSERINE PHOSPHATASE"/>
    <property type="match status" value="1"/>
</dbReference>
<dbReference type="PANTHER" id="PTHR43344:SF2">
    <property type="entry name" value="PHOSPHOSERINE PHOSPHATASE"/>
    <property type="match status" value="1"/>
</dbReference>
<dbReference type="Pfam" id="PF00702">
    <property type="entry name" value="Hydrolase"/>
    <property type="match status" value="1"/>
</dbReference>
<dbReference type="SFLD" id="SFLDG01137">
    <property type="entry name" value="C1.6.1:_Phosphoserine_Phosphat"/>
    <property type="match status" value="1"/>
</dbReference>
<dbReference type="SFLD" id="SFLDG01136">
    <property type="entry name" value="C1.6:_Phosphoserine_Phosphatas"/>
    <property type="match status" value="1"/>
</dbReference>
<dbReference type="SUPFAM" id="SSF56784">
    <property type="entry name" value="HAD-like"/>
    <property type="match status" value="1"/>
</dbReference>
<sequence length="225" mass="25008">MVSHSELRKLFYSADAVCFDVDSTVIREEGIDELAKICGVEDAVSEMTRRAMGGAVPFKAALTERLALIQPSREQVQRLIAEQPPHLTPGIRELVSRLQERNVQVFLISGGFRSIVEHVASKLNIPATNVFANRLKFYFNGEYAGFDETQPTAESGGKGKVIKLLKEKFHFKKIIMIGDGATDMEACPPADAFIGFGGNVIRQQVKDNAKWYITDFVELLGELEE</sequence>
<reference key="1">
    <citation type="journal article" date="1997" name="FEBS Lett.">
        <title>Human L-3-phosphoserine phosphatase: sequence, expression and evidence for a phosphoenzyme intermediate.</title>
        <authorList>
            <person name="Collet J.-F."/>
            <person name="Gerin I."/>
            <person name="Rider M.H."/>
            <person name="Veiga-Da-Cunha M."/>
            <person name="Van Schaftingen E."/>
        </authorList>
    </citation>
    <scope>NUCLEOTIDE SEQUENCE [MRNA]</scope>
</reference>
<reference key="2">
    <citation type="journal article" date="2004" name="Nat. Genet.">
        <title>Complete sequencing and characterization of 21,243 full-length human cDNAs.</title>
        <authorList>
            <person name="Ota T."/>
            <person name="Suzuki Y."/>
            <person name="Nishikawa T."/>
            <person name="Otsuki T."/>
            <person name="Sugiyama T."/>
            <person name="Irie R."/>
            <person name="Wakamatsu A."/>
            <person name="Hayashi K."/>
            <person name="Sato H."/>
            <person name="Nagai K."/>
            <person name="Kimura K."/>
            <person name="Makita H."/>
            <person name="Sekine M."/>
            <person name="Obayashi M."/>
            <person name="Nishi T."/>
            <person name="Shibahara T."/>
            <person name="Tanaka T."/>
            <person name="Ishii S."/>
            <person name="Yamamoto J."/>
            <person name="Saito K."/>
            <person name="Kawai Y."/>
            <person name="Isono Y."/>
            <person name="Nakamura Y."/>
            <person name="Nagahari K."/>
            <person name="Murakami K."/>
            <person name="Yasuda T."/>
            <person name="Iwayanagi T."/>
            <person name="Wagatsuma M."/>
            <person name="Shiratori A."/>
            <person name="Sudo H."/>
            <person name="Hosoiri T."/>
            <person name="Kaku Y."/>
            <person name="Kodaira H."/>
            <person name="Kondo H."/>
            <person name="Sugawara M."/>
            <person name="Takahashi M."/>
            <person name="Kanda K."/>
            <person name="Yokoi T."/>
            <person name="Furuya T."/>
            <person name="Kikkawa E."/>
            <person name="Omura Y."/>
            <person name="Abe K."/>
            <person name="Kamihara K."/>
            <person name="Katsuta N."/>
            <person name="Sato K."/>
            <person name="Tanikawa M."/>
            <person name="Yamazaki M."/>
            <person name="Ninomiya K."/>
            <person name="Ishibashi T."/>
            <person name="Yamashita H."/>
            <person name="Murakawa K."/>
            <person name="Fujimori K."/>
            <person name="Tanai H."/>
            <person name="Kimata M."/>
            <person name="Watanabe M."/>
            <person name="Hiraoka S."/>
            <person name="Chiba Y."/>
            <person name="Ishida S."/>
            <person name="Ono Y."/>
            <person name="Takiguchi S."/>
            <person name="Watanabe S."/>
            <person name="Yosida M."/>
            <person name="Hotuta T."/>
            <person name="Kusano J."/>
            <person name="Kanehori K."/>
            <person name="Takahashi-Fujii A."/>
            <person name="Hara H."/>
            <person name="Tanase T.-O."/>
            <person name="Nomura Y."/>
            <person name="Togiya S."/>
            <person name="Komai F."/>
            <person name="Hara R."/>
            <person name="Takeuchi K."/>
            <person name="Arita M."/>
            <person name="Imose N."/>
            <person name="Musashino K."/>
            <person name="Yuuki H."/>
            <person name="Oshima A."/>
            <person name="Sasaki N."/>
            <person name="Aotsuka S."/>
            <person name="Yoshikawa Y."/>
            <person name="Matsunawa H."/>
            <person name="Ichihara T."/>
            <person name="Shiohata N."/>
            <person name="Sano S."/>
            <person name="Moriya S."/>
            <person name="Momiyama H."/>
            <person name="Satoh N."/>
            <person name="Takami S."/>
            <person name="Terashima Y."/>
            <person name="Suzuki O."/>
            <person name="Nakagawa S."/>
            <person name="Senoh A."/>
            <person name="Mizoguchi H."/>
            <person name="Goto Y."/>
            <person name="Shimizu F."/>
            <person name="Wakebe H."/>
            <person name="Hishigaki H."/>
            <person name="Watanabe T."/>
            <person name="Sugiyama A."/>
            <person name="Takemoto M."/>
            <person name="Kawakami B."/>
            <person name="Yamazaki M."/>
            <person name="Watanabe K."/>
            <person name="Kumagai A."/>
            <person name="Itakura S."/>
            <person name="Fukuzumi Y."/>
            <person name="Fujimori Y."/>
            <person name="Komiyama M."/>
            <person name="Tashiro H."/>
            <person name="Tanigami A."/>
            <person name="Fujiwara T."/>
            <person name="Ono T."/>
            <person name="Yamada K."/>
            <person name="Fujii Y."/>
            <person name="Ozaki K."/>
            <person name="Hirao M."/>
            <person name="Ohmori Y."/>
            <person name="Kawabata A."/>
            <person name="Hikiji T."/>
            <person name="Kobatake N."/>
            <person name="Inagaki H."/>
            <person name="Ikema Y."/>
            <person name="Okamoto S."/>
            <person name="Okitani R."/>
            <person name="Kawakami T."/>
            <person name="Noguchi S."/>
            <person name="Itoh T."/>
            <person name="Shigeta K."/>
            <person name="Senba T."/>
            <person name="Matsumura K."/>
            <person name="Nakajima Y."/>
            <person name="Mizuno T."/>
            <person name="Morinaga M."/>
            <person name="Sasaki M."/>
            <person name="Togashi T."/>
            <person name="Oyama M."/>
            <person name="Hata H."/>
            <person name="Watanabe M."/>
            <person name="Komatsu T."/>
            <person name="Mizushima-Sugano J."/>
            <person name="Satoh T."/>
            <person name="Shirai Y."/>
            <person name="Takahashi Y."/>
            <person name="Nakagawa K."/>
            <person name="Okumura K."/>
            <person name="Nagase T."/>
            <person name="Nomura N."/>
            <person name="Kikuchi H."/>
            <person name="Masuho Y."/>
            <person name="Yamashita R."/>
            <person name="Nakai K."/>
            <person name="Yada T."/>
            <person name="Nakamura Y."/>
            <person name="Ohara O."/>
            <person name="Isogai T."/>
            <person name="Sugano S."/>
        </authorList>
    </citation>
    <scope>NUCLEOTIDE SEQUENCE [LARGE SCALE MRNA]</scope>
    <source>
        <tissue>Kidney</tissue>
    </source>
</reference>
<reference key="3">
    <citation type="journal article" date="2007" name="BMC Genomics">
        <title>The full-ORF clone resource of the German cDNA consortium.</title>
        <authorList>
            <person name="Bechtel S."/>
            <person name="Rosenfelder H."/>
            <person name="Duda A."/>
            <person name="Schmidt C.P."/>
            <person name="Ernst U."/>
            <person name="Wellenreuther R."/>
            <person name="Mehrle A."/>
            <person name="Schuster C."/>
            <person name="Bahr A."/>
            <person name="Bloecker H."/>
            <person name="Heubner D."/>
            <person name="Hoerlein A."/>
            <person name="Michel G."/>
            <person name="Wedler H."/>
            <person name="Koehrer K."/>
            <person name="Ottenwaelder B."/>
            <person name="Poustka A."/>
            <person name="Wiemann S."/>
            <person name="Schupp I."/>
        </authorList>
    </citation>
    <scope>NUCLEOTIDE SEQUENCE [LARGE SCALE MRNA]</scope>
    <source>
        <tissue>Endometrial tumor</tissue>
    </source>
</reference>
<reference key="4">
    <citation type="submission" date="2005-07" db="EMBL/GenBank/DDBJ databases">
        <authorList>
            <person name="Mural R.J."/>
            <person name="Istrail S."/>
            <person name="Sutton G.G."/>
            <person name="Florea L."/>
            <person name="Halpern A.L."/>
            <person name="Mobarry C.M."/>
            <person name="Lippert R."/>
            <person name="Walenz B."/>
            <person name="Shatkay H."/>
            <person name="Dew I."/>
            <person name="Miller J.R."/>
            <person name="Flanigan M.J."/>
            <person name="Edwards N.J."/>
            <person name="Bolanos R."/>
            <person name="Fasulo D."/>
            <person name="Halldorsson B.V."/>
            <person name="Hannenhalli S."/>
            <person name="Turner R."/>
            <person name="Yooseph S."/>
            <person name="Lu F."/>
            <person name="Nusskern D.R."/>
            <person name="Shue B.C."/>
            <person name="Zheng X.H."/>
            <person name="Zhong F."/>
            <person name="Delcher A.L."/>
            <person name="Huson D.H."/>
            <person name="Kravitz S.A."/>
            <person name="Mouchard L."/>
            <person name="Reinert K."/>
            <person name="Remington K.A."/>
            <person name="Clark A.G."/>
            <person name="Waterman M.S."/>
            <person name="Eichler E.E."/>
            <person name="Adams M.D."/>
            <person name="Hunkapiller M.W."/>
            <person name="Myers E.W."/>
            <person name="Venter J.C."/>
        </authorList>
    </citation>
    <scope>NUCLEOTIDE SEQUENCE [LARGE SCALE GENOMIC DNA]</scope>
</reference>
<reference key="5">
    <citation type="journal article" date="2004" name="Genome Res.">
        <title>The status, quality, and expansion of the NIH full-length cDNA project: the Mammalian Gene Collection (MGC).</title>
        <authorList>
            <consortium name="The MGC Project Team"/>
        </authorList>
    </citation>
    <scope>NUCLEOTIDE SEQUENCE [LARGE SCALE MRNA]</scope>
</reference>
<reference key="6">
    <citation type="journal article" date="1990" name="Neurochem. Res.">
        <title>Phosphoserine phosphatase of human brain: partial purification, characterization, regional distribution, and effect of certain modulators including psychoactive drugs.</title>
        <authorList>
            <person name="Shetty V."/>
            <person name="Shetty K.T."/>
        </authorList>
    </citation>
    <scope>FUNCTION</scope>
    <scope>SUBCELLULAR LOCATION</scope>
    <scope>CATALYTIC ACTIVITY</scope>
</reference>
<reference key="7">
    <citation type="journal article" date="2004" name="Eur. J. Biochem.">
        <title>How calcium inhibits the magnesium-dependent enzyme human phosphoserine phosphatase.</title>
        <authorList>
            <person name="Peeraer Y."/>
            <person name="Rabijns A."/>
            <person name="Collet J.F."/>
            <person name="Van Schaftingen E."/>
            <person name="De Ranter C."/>
        </authorList>
    </citation>
    <scope>FUNCTION</scope>
    <scope>CATALYTIC ACTIVITY</scope>
    <scope>COFACTOR</scope>
    <scope>ACTIVITY REGULATION</scope>
    <scope>SUBUNIT</scope>
</reference>
<reference key="8">
    <citation type="journal article" date="2009" name="Anal. Chem.">
        <title>Lys-N and trypsin cover complementary parts of the phosphoproteome in a refined SCX-based approach.</title>
        <authorList>
            <person name="Gauci S."/>
            <person name="Helbig A.O."/>
            <person name="Slijper M."/>
            <person name="Krijgsveld J."/>
            <person name="Heck A.J."/>
            <person name="Mohammed S."/>
        </authorList>
    </citation>
    <scope>ACETYLATION [LARGE SCALE ANALYSIS] AT MET-1</scope>
    <scope>IDENTIFICATION BY MASS SPECTROMETRY [LARGE SCALE ANALYSIS]</scope>
</reference>
<reference key="9">
    <citation type="journal article" date="2011" name="BMC Syst. Biol.">
        <title>Initial characterization of the human central proteome.</title>
        <authorList>
            <person name="Burkard T.R."/>
            <person name="Planyavsky M."/>
            <person name="Kaupe I."/>
            <person name="Breitwieser F.P."/>
            <person name="Buerckstuemmer T."/>
            <person name="Bennett K.L."/>
            <person name="Superti-Furga G."/>
            <person name="Colinge J."/>
        </authorList>
    </citation>
    <scope>IDENTIFICATION BY MASS SPECTROMETRY [LARGE SCALE ANALYSIS]</scope>
</reference>
<reference evidence="16 17" key="10">
    <citation type="journal article" date="2002" name="J. Biol. Chem.">
        <title>Molecular basis for the local conformational rearrangement of human phosphoserine phosphatase.</title>
        <authorList>
            <person name="Kim H.Y."/>
            <person name="Heo Y.S."/>
            <person name="Kim J.H."/>
            <person name="Park M.H."/>
            <person name="Moon J."/>
            <person name="Kim E."/>
            <person name="Kwon D."/>
            <person name="Yoon J."/>
            <person name="Shin D."/>
            <person name="Jeong E.J."/>
            <person name="Park S.Y."/>
            <person name="Lee T.G."/>
            <person name="Jeon Y.H."/>
            <person name="Ro S."/>
            <person name="Cho J.M."/>
            <person name="Hwang K.Y."/>
        </authorList>
    </citation>
    <scope>X-RAY CRYSTALLOGRAPHY (2.51 ANGSTROMS) OF 3-225 IN COMPLEXES WITH INHIBITOR 2-AMINO-3-PHOSPHONOPROPIONIC ACID</scope>
    <scope>FUNCTION</scope>
    <scope>CATALYTIC ACTIVITY</scope>
    <scope>SUBUNIT</scope>
    <scope>MUTAGENESIS OF SER-23; GLU-29; ARG-65; ASN-133; THR-182 AND ARG-202</scope>
</reference>
<reference evidence="18" key="11">
    <citation type="journal article" date="2003" name="Acta Crystallogr. D">
        <title>High-resolution structure of human phosphoserine phosphatase in open conformation.</title>
        <authorList>
            <person name="Peeraer Y."/>
            <person name="Rabijns A."/>
            <person name="Verboven C."/>
            <person name="Collet J.F."/>
            <person name="Van Schaftingen E."/>
            <person name="De Ranter C."/>
        </authorList>
    </citation>
    <scope>X-RAY CRYSTALLOGRAPHY (1.53 ANGSTROMS) OF 3-225 IN COMPLEX WITH CALCIUM IONS</scope>
    <scope>SUBUNIT</scope>
</reference>
<reference evidence="19 20 21" key="12">
    <citation type="journal article" date="2019" name="Acta Crystallogr. D">
        <title>Crystal structures and snapshots along the reaction pathway of human phosphoserine phosphatase.</title>
        <authorList>
            <person name="Haufroid M."/>
            <person name="Mirgaux M."/>
            <person name="Leherte L."/>
            <person name="Wouters J."/>
        </authorList>
    </citation>
    <scope>X-RAY CRYSTALLOGRAPHY (1.57 ANGSTROMS) OF 5-225 IN COMPLEX WITH O-PHOSPHO-L-SERINE PHOSPHATE L-SERINE; SERINE AND PHOSPHATE</scope>
    <scope>COFACTOR</scope>
    <scope>SUBUNIT</scope>
    <scope>ACTIVE SITE</scope>
</reference>
<reference key="13">
    <citation type="journal article" date="1997" name="J. Med. Genet.">
        <title>Phosphoserine phosphatase deficiency in a patient with Williams syndrome.</title>
        <authorList>
            <person name="Jaeken J."/>
            <person name="Detheux M."/>
            <person name="Fryns J.P."/>
            <person name="Collet J.F."/>
            <person name="Alliet P."/>
            <person name="Van Schaftingen E."/>
        </authorList>
    </citation>
    <scope>INVOLVEMENT IN PSPHD</scope>
    <scope>FUNCTION</scope>
    <scope>CATALYTIC ACTIVITY</scope>
    <scope>PATHWAY</scope>
</reference>
<reference key="14">
    <citation type="journal article" date="2004" name="Eur. J. Hum. Genet.">
        <title>Mutations responsible for 3-phosphoserine phosphatase deficiency.</title>
        <authorList>
            <person name="Veiga-da-Cunha M."/>
            <person name="Collet J.F."/>
            <person name="Prieur B."/>
            <person name="Jaeken J."/>
            <person name="Peeraer Y."/>
            <person name="Rabbijns A."/>
            <person name="Van Schaftingen E."/>
        </authorList>
    </citation>
    <scope>VARIANTS PSPHD ASN-32 AND THR-52</scope>
    <scope>CHARACTERIZATION OF VARIANTS PSPHD ASN-32 AND THR-52</scope>
    <scope>FUNCTION</scope>
    <scope>CATALYTIC ACTIVITY</scope>
    <scope>PATHWAY</scope>
</reference>
<reference key="15">
    <citation type="journal article" date="2015" name="Clin. Genet.">
        <title>Phosphoserine phosphatase (PSPH) gene mutation in an intellectual disability family from Pakistan.</title>
        <authorList>
            <person name="Vincent J.B."/>
            <person name="Jamil T."/>
            <person name="Rafiq M.A."/>
            <person name="Anwar Z."/>
            <person name="Ayaz M."/>
            <person name="Hameed A."/>
            <person name="Nasr T."/>
            <person name="Naeem F."/>
            <person name="Khattak N.A."/>
            <person name="Carter M."/>
            <person name="Ahmed I."/>
            <person name="John P."/>
            <person name="Wiame E."/>
            <person name="Andrade D.M."/>
            <person name="Schaftingen E.V."/>
            <person name="Mir A."/>
            <person name="Ayub M."/>
        </authorList>
    </citation>
    <scope>VARIANT PSPHD THR-35</scope>
    <scope>CHARACTERIZATION OF VARIANT PSPHD THR-35</scope>
    <scope>FUNCTION</scope>
    <scope>CATALYTIC ACTIVITY</scope>
    <scope>PATHWAY</scope>
</reference>
<name>SERB_HUMAN</name>
<proteinExistence type="evidence at protein level"/>
<accession>P78330</accession>
<accession>B2RCR5</accession>
<accession>Q7Z3S5</accession>